<evidence type="ECO:0000255" key="1">
    <source>
        <dbReference type="HAMAP-Rule" id="MF_01350"/>
    </source>
</evidence>
<gene>
    <name evidence="1" type="primary">nuoH</name>
    <name type="ordered locus">PPA1929</name>
</gene>
<accession>Q6A6G5</accession>
<comment type="function">
    <text evidence="1">NDH-1 shuttles electrons from NADH, via FMN and iron-sulfur (Fe-S) centers, to quinones in the respiratory chain. The immediate electron acceptor for the enzyme in this species is believed to be ubiquinone. Couples the redox reaction to proton translocation (for every two electrons transferred, four hydrogen ions are translocated across the cytoplasmic membrane), and thus conserves the redox energy in a proton gradient. This subunit may bind ubiquinone.</text>
</comment>
<comment type="catalytic activity">
    <reaction evidence="1">
        <text>a quinone + NADH + 5 H(+)(in) = a quinol + NAD(+) + 4 H(+)(out)</text>
        <dbReference type="Rhea" id="RHEA:57888"/>
        <dbReference type="ChEBI" id="CHEBI:15378"/>
        <dbReference type="ChEBI" id="CHEBI:24646"/>
        <dbReference type="ChEBI" id="CHEBI:57540"/>
        <dbReference type="ChEBI" id="CHEBI:57945"/>
        <dbReference type="ChEBI" id="CHEBI:132124"/>
    </reaction>
</comment>
<comment type="subunit">
    <text evidence="1">NDH-1 is composed of 14 different subunits. Subunits NuoA, H, J, K, L, M, N constitute the membrane sector of the complex.</text>
</comment>
<comment type="subcellular location">
    <subcellularLocation>
        <location evidence="1">Cell membrane</location>
        <topology evidence="1">Multi-pass membrane protein</topology>
    </subcellularLocation>
</comment>
<comment type="similarity">
    <text evidence="1">Belongs to the complex I subunit 1 family.</text>
</comment>
<reference key="1">
    <citation type="journal article" date="2004" name="Science">
        <title>The complete genome sequence of Propionibacterium acnes, a commensal of human skin.</title>
        <authorList>
            <person name="Brueggemann H."/>
            <person name="Henne A."/>
            <person name="Hoster F."/>
            <person name="Liesegang H."/>
            <person name="Wiezer A."/>
            <person name="Strittmatter A."/>
            <person name="Hujer S."/>
            <person name="Duerre P."/>
            <person name="Gottschalk G."/>
        </authorList>
    </citation>
    <scope>NUCLEOTIDE SEQUENCE [LARGE SCALE GENOMIC DNA]</scope>
    <source>
        <strain>DSM 16379 / KPA171202</strain>
    </source>
</reference>
<organism>
    <name type="scientific">Cutibacterium acnes (strain DSM 16379 / KPA171202)</name>
    <name type="common">Propionibacterium acnes</name>
    <dbReference type="NCBI Taxonomy" id="267747"/>
    <lineage>
        <taxon>Bacteria</taxon>
        <taxon>Bacillati</taxon>
        <taxon>Actinomycetota</taxon>
        <taxon>Actinomycetes</taxon>
        <taxon>Propionibacteriales</taxon>
        <taxon>Propionibacteriaceae</taxon>
        <taxon>Cutibacterium</taxon>
    </lineage>
</organism>
<keyword id="KW-1003">Cell membrane</keyword>
<keyword id="KW-0472">Membrane</keyword>
<keyword id="KW-0520">NAD</keyword>
<keyword id="KW-0874">Quinone</keyword>
<keyword id="KW-1278">Translocase</keyword>
<keyword id="KW-0812">Transmembrane</keyword>
<keyword id="KW-1133">Transmembrane helix</keyword>
<keyword id="KW-0830">Ubiquinone</keyword>
<dbReference type="EC" id="7.1.1.-" evidence="1"/>
<dbReference type="EMBL" id="AE017283">
    <property type="protein sequence ID" value="AAT83648.1"/>
    <property type="molecule type" value="Genomic_DNA"/>
</dbReference>
<dbReference type="RefSeq" id="WP_002514928.1">
    <property type="nucleotide sequence ID" value="NZ_CP025935.1"/>
</dbReference>
<dbReference type="SMR" id="Q6A6G5"/>
<dbReference type="EnsemblBacteria" id="AAT83648">
    <property type="protein sequence ID" value="AAT83648"/>
    <property type="gene ID" value="PPA1929"/>
</dbReference>
<dbReference type="KEGG" id="pac:PPA1929"/>
<dbReference type="eggNOG" id="COG1005">
    <property type="taxonomic scope" value="Bacteria"/>
</dbReference>
<dbReference type="HOGENOM" id="CLU_015134_0_0_11"/>
<dbReference type="Proteomes" id="UP000000603">
    <property type="component" value="Chromosome"/>
</dbReference>
<dbReference type="GO" id="GO:0005886">
    <property type="term" value="C:plasma membrane"/>
    <property type="evidence" value="ECO:0007669"/>
    <property type="project" value="UniProtKB-SubCell"/>
</dbReference>
<dbReference type="GO" id="GO:0003954">
    <property type="term" value="F:NADH dehydrogenase activity"/>
    <property type="evidence" value="ECO:0007669"/>
    <property type="project" value="TreeGrafter"/>
</dbReference>
<dbReference type="GO" id="GO:0016655">
    <property type="term" value="F:oxidoreductase activity, acting on NAD(P)H, quinone or similar compound as acceptor"/>
    <property type="evidence" value="ECO:0007669"/>
    <property type="project" value="UniProtKB-UniRule"/>
</dbReference>
<dbReference type="GO" id="GO:0048038">
    <property type="term" value="F:quinone binding"/>
    <property type="evidence" value="ECO:0007669"/>
    <property type="project" value="UniProtKB-KW"/>
</dbReference>
<dbReference type="GO" id="GO:0009060">
    <property type="term" value="P:aerobic respiration"/>
    <property type="evidence" value="ECO:0007669"/>
    <property type="project" value="TreeGrafter"/>
</dbReference>
<dbReference type="HAMAP" id="MF_01350">
    <property type="entry name" value="NDH1_NuoH"/>
    <property type="match status" value="1"/>
</dbReference>
<dbReference type="InterPro" id="IPR001694">
    <property type="entry name" value="NADH_UbQ_OxRdtase_su1/FPO"/>
</dbReference>
<dbReference type="InterPro" id="IPR018086">
    <property type="entry name" value="NADH_UbQ_OxRdtase_su1_CS"/>
</dbReference>
<dbReference type="NCBIfam" id="NF004743">
    <property type="entry name" value="PRK06076.1-4"/>
    <property type="match status" value="1"/>
</dbReference>
<dbReference type="PANTHER" id="PTHR11432">
    <property type="entry name" value="NADH DEHYDROGENASE SUBUNIT 1"/>
    <property type="match status" value="1"/>
</dbReference>
<dbReference type="PANTHER" id="PTHR11432:SF3">
    <property type="entry name" value="NADH-UBIQUINONE OXIDOREDUCTASE CHAIN 1"/>
    <property type="match status" value="1"/>
</dbReference>
<dbReference type="Pfam" id="PF00146">
    <property type="entry name" value="NADHdh"/>
    <property type="match status" value="1"/>
</dbReference>
<dbReference type="PROSITE" id="PS00667">
    <property type="entry name" value="COMPLEX1_ND1_1"/>
    <property type="match status" value="1"/>
</dbReference>
<dbReference type="PROSITE" id="PS00668">
    <property type="entry name" value="COMPLEX1_ND1_2"/>
    <property type="match status" value="1"/>
</dbReference>
<name>NUOH_CUTAK</name>
<feature type="chain" id="PRO_0000244929" description="NADH-quinone oxidoreductase subunit H">
    <location>
        <begin position="1"/>
        <end position="440"/>
    </location>
</feature>
<feature type="transmembrane region" description="Helical" evidence="1">
    <location>
        <begin position="11"/>
        <end position="31"/>
    </location>
</feature>
<feature type="transmembrane region" description="Helical" evidence="1">
    <location>
        <begin position="83"/>
        <end position="103"/>
    </location>
</feature>
<feature type="transmembrane region" description="Helical" evidence="1">
    <location>
        <begin position="123"/>
        <end position="143"/>
    </location>
</feature>
<feature type="transmembrane region" description="Helical" evidence="1">
    <location>
        <begin position="164"/>
        <end position="184"/>
    </location>
</feature>
<feature type="transmembrane region" description="Helical" evidence="1">
    <location>
        <begin position="207"/>
        <end position="227"/>
    </location>
</feature>
<feature type="transmembrane region" description="Helical" evidence="1">
    <location>
        <begin position="261"/>
        <end position="281"/>
    </location>
</feature>
<feature type="transmembrane region" description="Helical" evidence="1">
    <location>
        <begin position="299"/>
        <end position="319"/>
    </location>
</feature>
<feature type="transmembrane region" description="Helical" evidence="1">
    <location>
        <begin position="331"/>
        <end position="351"/>
    </location>
</feature>
<feature type="transmembrane region" description="Helical" evidence="1">
    <location>
        <begin position="366"/>
        <end position="386"/>
    </location>
</feature>
<protein>
    <recommendedName>
        <fullName evidence="1">NADH-quinone oxidoreductase subunit H</fullName>
        <ecNumber evidence="1">7.1.1.-</ecNumber>
    </recommendedName>
    <alternativeName>
        <fullName evidence="1">NADH dehydrogenase I subunit H</fullName>
    </alternativeName>
    <alternativeName>
        <fullName evidence="1">NDH-1 subunit H</fullName>
    </alternativeName>
</protein>
<proteinExistence type="inferred from homology"/>
<sequence length="440" mass="48287">MSPLEATIDPVWLIIVKVVILFVILLAWTIFNVWFERRVLAKMQNRIGPIMNSAWAGGVFQAVGDGLKLIFKEMLTPKGADKIVFNLAPVIAGIACFASWSVIPLGGQVSMFGHTTRLQITDVPVAVLFILAVASIGIYGVVLAGWSSAGTYSLLGSLRSSAQMISYEVAMGLSLVTVFIFSGSMSTSQIVESQANHLVVGGFDTHIAGHYWLLLIPSFVIYVITMFGESNRLPFDLPECESELVSGYITEYSGFPYGMYFLAEYINMATLSAVCTTLFLGGYRAPWPLNYFGVIDSGWWGLLWFFLKTQLVIFFFVWVRAAIPRFRYDHFMDLGWKVLIPVSLGWVLLVAAWRTVINQGWGRNPVFLVVVGVILVALIVWAFMGGKTDSTADEAPDEPFDAFAGGYPVPPLPHQVQAPLAGAATATTVARRDHDENGGL</sequence>